<gene>
    <name type="primary">Prm1</name>
    <name type="synonym">Prm-1</name>
</gene>
<evidence type="ECO:0000250" key="1"/>
<evidence type="ECO:0000250" key="2">
    <source>
        <dbReference type="UniProtKB" id="P02318"/>
    </source>
</evidence>
<evidence type="ECO:0000269" key="3">
    <source>
    </source>
</evidence>
<evidence type="ECO:0000305" key="4"/>
<reference key="1">
    <citation type="journal article" date="1985" name="Biochemistry">
        <title>Nucleotide sequence of a cDNA clone encoding mouse protamine 1.</title>
        <authorList>
            <person name="Kleene K.C."/>
            <person name="Distel R.J."/>
            <person name="Hecht N.B."/>
        </authorList>
    </citation>
    <scope>NUCLEOTIDE SEQUENCE [MRNA]</scope>
</reference>
<reference key="2">
    <citation type="journal article" date="1988" name="Biochim. Biophys. Acta">
        <title>Sequence homologies in the mouse protamine 1 and 2 genes.</title>
        <authorList>
            <person name="Johnson P.A."/>
            <person name="Pschon J.J."/>
            <person name="Yelick P.C."/>
            <person name="Palmiter R.D."/>
            <person name="Hecht N.B."/>
        </authorList>
    </citation>
    <scope>NUCLEOTIDE SEQUENCE [GENOMIC DNA / MRNA]</scope>
</reference>
<reference key="3">
    <citation type="journal article" date="1987" name="Proc. Natl. Acad. Sci. U.S.A.">
        <title>Spermatid-specific expression of protamine 1 in transgenic mice.</title>
        <authorList>
            <person name="Peschon J.J."/>
            <person name="Behringer R.R."/>
            <person name="Brinster R.L."/>
            <person name="Palmiter R.D."/>
        </authorList>
    </citation>
    <scope>NUCLEOTIDE SEQUENCE</scope>
</reference>
<reference key="4">
    <citation type="journal article" date="1987" name="Ann. N. Y. Acad. Sci.">
        <title>Gene expression during spermatogenesis.</title>
        <authorList>
            <person name="Hecht N.B."/>
        </authorList>
    </citation>
    <scope>NUCLEOTIDE SEQUENCE</scope>
</reference>
<reference key="5">
    <citation type="submission" date="1995-07" db="EMBL/GenBank/DDBJ databases">
        <authorList>
            <person name="Schlueter G."/>
            <person name="Engel W."/>
        </authorList>
    </citation>
    <scope>NUCLEOTIDE SEQUENCE</scope>
    <source>
        <strain>C129</strain>
    </source>
</reference>
<reference key="6">
    <citation type="journal article" date="2005" name="Science">
        <title>The transcriptional landscape of the mammalian genome.</title>
        <authorList>
            <person name="Carninci P."/>
            <person name="Kasukawa T."/>
            <person name="Katayama S."/>
            <person name="Gough J."/>
            <person name="Frith M.C."/>
            <person name="Maeda N."/>
            <person name="Oyama R."/>
            <person name="Ravasi T."/>
            <person name="Lenhard B."/>
            <person name="Wells C."/>
            <person name="Kodzius R."/>
            <person name="Shimokawa K."/>
            <person name="Bajic V.B."/>
            <person name="Brenner S.E."/>
            <person name="Batalov S."/>
            <person name="Forrest A.R."/>
            <person name="Zavolan M."/>
            <person name="Davis M.J."/>
            <person name="Wilming L.G."/>
            <person name="Aidinis V."/>
            <person name="Allen J.E."/>
            <person name="Ambesi-Impiombato A."/>
            <person name="Apweiler R."/>
            <person name="Aturaliya R.N."/>
            <person name="Bailey T.L."/>
            <person name="Bansal M."/>
            <person name="Baxter L."/>
            <person name="Beisel K.W."/>
            <person name="Bersano T."/>
            <person name="Bono H."/>
            <person name="Chalk A.M."/>
            <person name="Chiu K.P."/>
            <person name="Choudhary V."/>
            <person name="Christoffels A."/>
            <person name="Clutterbuck D.R."/>
            <person name="Crowe M.L."/>
            <person name="Dalla E."/>
            <person name="Dalrymple B.P."/>
            <person name="de Bono B."/>
            <person name="Della Gatta G."/>
            <person name="di Bernardo D."/>
            <person name="Down T."/>
            <person name="Engstrom P."/>
            <person name="Fagiolini M."/>
            <person name="Faulkner G."/>
            <person name="Fletcher C.F."/>
            <person name="Fukushima T."/>
            <person name="Furuno M."/>
            <person name="Futaki S."/>
            <person name="Gariboldi M."/>
            <person name="Georgii-Hemming P."/>
            <person name="Gingeras T.R."/>
            <person name="Gojobori T."/>
            <person name="Green R.E."/>
            <person name="Gustincich S."/>
            <person name="Harbers M."/>
            <person name="Hayashi Y."/>
            <person name="Hensch T.K."/>
            <person name="Hirokawa N."/>
            <person name="Hill D."/>
            <person name="Huminiecki L."/>
            <person name="Iacono M."/>
            <person name="Ikeo K."/>
            <person name="Iwama A."/>
            <person name="Ishikawa T."/>
            <person name="Jakt M."/>
            <person name="Kanapin A."/>
            <person name="Katoh M."/>
            <person name="Kawasawa Y."/>
            <person name="Kelso J."/>
            <person name="Kitamura H."/>
            <person name="Kitano H."/>
            <person name="Kollias G."/>
            <person name="Krishnan S.P."/>
            <person name="Kruger A."/>
            <person name="Kummerfeld S.K."/>
            <person name="Kurochkin I.V."/>
            <person name="Lareau L.F."/>
            <person name="Lazarevic D."/>
            <person name="Lipovich L."/>
            <person name="Liu J."/>
            <person name="Liuni S."/>
            <person name="McWilliam S."/>
            <person name="Madan Babu M."/>
            <person name="Madera M."/>
            <person name="Marchionni L."/>
            <person name="Matsuda H."/>
            <person name="Matsuzawa S."/>
            <person name="Miki H."/>
            <person name="Mignone F."/>
            <person name="Miyake S."/>
            <person name="Morris K."/>
            <person name="Mottagui-Tabar S."/>
            <person name="Mulder N."/>
            <person name="Nakano N."/>
            <person name="Nakauchi H."/>
            <person name="Ng P."/>
            <person name="Nilsson R."/>
            <person name="Nishiguchi S."/>
            <person name="Nishikawa S."/>
            <person name="Nori F."/>
            <person name="Ohara O."/>
            <person name="Okazaki Y."/>
            <person name="Orlando V."/>
            <person name="Pang K.C."/>
            <person name="Pavan W.J."/>
            <person name="Pavesi G."/>
            <person name="Pesole G."/>
            <person name="Petrovsky N."/>
            <person name="Piazza S."/>
            <person name="Reed J."/>
            <person name="Reid J.F."/>
            <person name="Ring B.Z."/>
            <person name="Ringwald M."/>
            <person name="Rost B."/>
            <person name="Ruan Y."/>
            <person name="Salzberg S.L."/>
            <person name="Sandelin A."/>
            <person name="Schneider C."/>
            <person name="Schoenbach C."/>
            <person name="Sekiguchi K."/>
            <person name="Semple C.A."/>
            <person name="Seno S."/>
            <person name="Sessa L."/>
            <person name="Sheng Y."/>
            <person name="Shibata Y."/>
            <person name="Shimada H."/>
            <person name="Shimada K."/>
            <person name="Silva D."/>
            <person name="Sinclair B."/>
            <person name="Sperling S."/>
            <person name="Stupka E."/>
            <person name="Sugiura K."/>
            <person name="Sultana R."/>
            <person name="Takenaka Y."/>
            <person name="Taki K."/>
            <person name="Tammoja K."/>
            <person name="Tan S.L."/>
            <person name="Tang S."/>
            <person name="Taylor M.S."/>
            <person name="Tegner J."/>
            <person name="Teichmann S.A."/>
            <person name="Ueda H.R."/>
            <person name="van Nimwegen E."/>
            <person name="Verardo R."/>
            <person name="Wei C.L."/>
            <person name="Yagi K."/>
            <person name="Yamanishi H."/>
            <person name="Zabarovsky E."/>
            <person name="Zhu S."/>
            <person name="Zimmer A."/>
            <person name="Hide W."/>
            <person name="Bult C."/>
            <person name="Grimmond S.M."/>
            <person name="Teasdale R.D."/>
            <person name="Liu E.T."/>
            <person name="Brusic V."/>
            <person name="Quackenbush J."/>
            <person name="Wahlestedt C."/>
            <person name="Mattick J.S."/>
            <person name="Hume D.A."/>
            <person name="Kai C."/>
            <person name="Sasaki D."/>
            <person name="Tomaru Y."/>
            <person name="Fukuda S."/>
            <person name="Kanamori-Katayama M."/>
            <person name="Suzuki M."/>
            <person name="Aoki J."/>
            <person name="Arakawa T."/>
            <person name="Iida J."/>
            <person name="Imamura K."/>
            <person name="Itoh M."/>
            <person name="Kato T."/>
            <person name="Kawaji H."/>
            <person name="Kawagashira N."/>
            <person name="Kawashima T."/>
            <person name="Kojima M."/>
            <person name="Kondo S."/>
            <person name="Konno H."/>
            <person name="Nakano K."/>
            <person name="Ninomiya N."/>
            <person name="Nishio T."/>
            <person name="Okada M."/>
            <person name="Plessy C."/>
            <person name="Shibata K."/>
            <person name="Shiraki T."/>
            <person name="Suzuki S."/>
            <person name="Tagami M."/>
            <person name="Waki K."/>
            <person name="Watahiki A."/>
            <person name="Okamura-Oho Y."/>
            <person name="Suzuki H."/>
            <person name="Kawai J."/>
            <person name="Hayashizaki Y."/>
        </authorList>
    </citation>
    <scope>NUCLEOTIDE SEQUENCE [LARGE SCALE MRNA]</scope>
    <source>
        <strain>C57BL/6J</strain>
        <tissue>Testis</tissue>
    </source>
</reference>
<reference key="7">
    <citation type="journal article" date="2004" name="Genome Res.">
        <title>The status, quality, and expansion of the NIH full-length cDNA project: the Mammalian Gene Collection (MGC).</title>
        <authorList>
            <consortium name="The MGC Project Team"/>
        </authorList>
    </citation>
    <scope>NUCLEOTIDE SEQUENCE [LARGE SCALE MRNA]</scope>
    <source>
        <tissue>Testis</tissue>
    </source>
</reference>
<reference key="8">
    <citation type="journal article" date="1999" name="Nucleic Acids Res.">
        <title>SR protein-specific kinase 1 is highly expressed in testis and phosphorylates protamine 1.</title>
        <authorList>
            <person name="Papoutsopoulou S."/>
            <person name="Nikolakaki E."/>
            <person name="Chalepakis G."/>
            <person name="Kruft V."/>
            <person name="Chevaillier P."/>
            <person name="Giannakouros T."/>
        </authorList>
    </citation>
    <scope>PHOSPHORYLATION BY SRPK1</scope>
</reference>
<feature type="chain" id="PRO_0000191498" description="Sperm protamine P1">
    <location>
        <begin position="1"/>
        <end position="51"/>
    </location>
</feature>
<feature type="disulfide bond" description="Interchain (with C-22)" evidence="2">
    <location>
        <position position="6"/>
    </location>
</feature>
<feature type="disulfide bond" evidence="2">
    <location>
        <begin position="7"/>
        <end position="15"/>
    </location>
</feature>
<feature type="disulfide bond" description="Interchain (with C-6)" evidence="2">
    <location>
        <position position="22"/>
    </location>
</feature>
<feature type="disulfide bond" description="Interchain (with C-37)" evidence="2">
    <location>
        <position position="37"/>
    </location>
</feature>
<feature type="disulfide bond" evidence="2">
    <location>
        <begin position="38"/>
        <end position="48"/>
    </location>
</feature>
<keyword id="KW-0158">Chromosome</keyword>
<keyword id="KW-0217">Developmental protein</keyword>
<keyword id="KW-0221">Differentiation</keyword>
<keyword id="KW-1015">Disulfide bond</keyword>
<keyword id="KW-0226">DNA condensation</keyword>
<keyword id="KW-0238">DNA-binding</keyword>
<keyword id="KW-0544">Nucleosome core</keyword>
<keyword id="KW-0539">Nucleus</keyword>
<keyword id="KW-0597">Phosphoprotein</keyword>
<keyword id="KW-1185">Reference proteome</keyword>
<keyword id="KW-0744">Spermatogenesis</keyword>
<sequence length="51" mass="6958">MARYRCCRSKSRSRCRRRRRRCRRRRRRCCRRRRRRCCRRRRSYTIRCKKY</sequence>
<accession>P02319</accession>
<dbReference type="EMBL" id="K02926">
    <property type="protein sequence ID" value="AAA39980.1"/>
    <property type="molecule type" value="mRNA"/>
</dbReference>
<dbReference type="EMBL" id="X07625">
    <property type="protein sequence ID" value="CAA30472.1"/>
    <property type="molecule type" value="Genomic_DNA"/>
</dbReference>
<dbReference type="EMBL" id="X14003">
    <property type="protein sequence ID" value="CAA32169.1"/>
    <property type="molecule type" value="mRNA"/>
</dbReference>
<dbReference type="EMBL" id="M27500">
    <property type="protein sequence ID" value="AAA39985.1"/>
    <property type="molecule type" value="mRNA"/>
</dbReference>
<dbReference type="EMBL" id="Z47352">
    <property type="protein sequence ID" value="CAA87410.1"/>
    <property type="molecule type" value="Genomic_DNA"/>
</dbReference>
<dbReference type="EMBL" id="AK007068">
    <property type="protein sequence ID" value="BAC25162.1"/>
    <property type="molecule type" value="mRNA"/>
</dbReference>
<dbReference type="EMBL" id="BC059733">
    <property type="protein sequence ID" value="AAH59733.1"/>
    <property type="molecule type" value="mRNA"/>
</dbReference>
<dbReference type="CCDS" id="CCDS27956.1"/>
<dbReference type="PIR" id="I51954">
    <property type="entry name" value="HSMSS1"/>
</dbReference>
<dbReference type="RefSeq" id="NP_038665.1">
    <property type="nucleotide sequence ID" value="NM_013637.5"/>
</dbReference>
<dbReference type="FunCoup" id="P02319">
    <property type="interactions" value="70"/>
</dbReference>
<dbReference type="STRING" id="10090.ENSMUSP00000023144"/>
<dbReference type="iPTMnet" id="P02319"/>
<dbReference type="PhosphoSitePlus" id="P02319"/>
<dbReference type="PaxDb" id="10090-ENSMUSP00000023144"/>
<dbReference type="DNASU" id="19118"/>
<dbReference type="Ensembl" id="ENSMUST00000023144.6">
    <property type="protein sequence ID" value="ENSMUSP00000023144.6"/>
    <property type="gene ID" value="ENSMUSG00000022501.7"/>
</dbReference>
<dbReference type="Ensembl" id="ENSMUST00000230568.2">
    <property type="protein sequence ID" value="ENSMUSP00000155855.2"/>
    <property type="gene ID" value="ENSMUSG00000022501.7"/>
</dbReference>
<dbReference type="GeneID" id="19118"/>
<dbReference type="KEGG" id="mmu:19118"/>
<dbReference type="UCSC" id="uc007yej.1">
    <property type="organism name" value="mouse"/>
</dbReference>
<dbReference type="AGR" id="MGI:97765"/>
<dbReference type="CTD" id="5619"/>
<dbReference type="MGI" id="MGI:97765">
    <property type="gene designation" value="Prm1"/>
</dbReference>
<dbReference type="VEuPathDB" id="HostDB:ENSMUSG00000022501"/>
<dbReference type="GeneTree" id="ENSGT00900000142796"/>
<dbReference type="HOGENOM" id="CLU_214580_2_0_1"/>
<dbReference type="InParanoid" id="P02319"/>
<dbReference type="OMA" id="MARYICC"/>
<dbReference type="BioGRID-ORCS" id="19118">
    <property type="hits" value="2 hits in 59 CRISPR screens"/>
</dbReference>
<dbReference type="ChiTaRS" id="Prm1">
    <property type="organism name" value="mouse"/>
</dbReference>
<dbReference type="PRO" id="PR:P02319"/>
<dbReference type="Proteomes" id="UP000000589">
    <property type="component" value="Chromosome 16"/>
</dbReference>
<dbReference type="RNAct" id="P02319">
    <property type="molecule type" value="protein"/>
</dbReference>
<dbReference type="Bgee" id="ENSMUSG00000022501">
    <property type="expression patterns" value="Expressed in seminiferous tubule of testis and 48 other cell types or tissues"/>
</dbReference>
<dbReference type="ExpressionAtlas" id="P02319">
    <property type="expression patterns" value="baseline and differential"/>
</dbReference>
<dbReference type="GO" id="GO:0001673">
    <property type="term" value="C:male germ cell nucleus"/>
    <property type="evidence" value="ECO:0000314"/>
    <property type="project" value="MGI"/>
</dbReference>
<dbReference type="GO" id="GO:0005654">
    <property type="term" value="C:nucleoplasm"/>
    <property type="evidence" value="ECO:0000304"/>
    <property type="project" value="Reactome"/>
</dbReference>
<dbReference type="GO" id="GO:0000786">
    <property type="term" value="C:nucleosome"/>
    <property type="evidence" value="ECO:0007669"/>
    <property type="project" value="UniProtKB-KW"/>
</dbReference>
<dbReference type="GO" id="GO:0005634">
    <property type="term" value="C:nucleus"/>
    <property type="evidence" value="ECO:0000314"/>
    <property type="project" value="MGI"/>
</dbReference>
<dbReference type="GO" id="GO:0003677">
    <property type="term" value="F:DNA binding"/>
    <property type="evidence" value="ECO:0000304"/>
    <property type="project" value="MGI"/>
</dbReference>
<dbReference type="GO" id="GO:0030261">
    <property type="term" value="P:chromosome condensation"/>
    <property type="evidence" value="ECO:0000304"/>
    <property type="project" value="MGI"/>
</dbReference>
<dbReference type="GO" id="GO:0006997">
    <property type="term" value="P:nucleus organization"/>
    <property type="evidence" value="ECO:0000315"/>
    <property type="project" value="MGI"/>
</dbReference>
<dbReference type="GO" id="GO:0035092">
    <property type="term" value="P:sperm DNA condensation"/>
    <property type="evidence" value="ECO:0007669"/>
    <property type="project" value="InterPro"/>
</dbReference>
<dbReference type="GO" id="GO:0007286">
    <property type="term" value="P:spermatid development"/>
    <property type="evidence" value="ECO:0000315"/>
    <property type="project" value="MGI"/>
</dbReference>
<dbReference type="InterPro" id="IPR000221">
    <property type="entry name" value="Protamine_P1"/>
</dbReference>
<dbReference type="Pfam" id="PF00260">
    <property type="entry name" value="Protamine_P1"/>
    <property type="match status" value="1"/>
</dbReference>
<dbReference type="PROSITE" id="PS00048">
    <property type="entry name" value="PROTAMINE_P1"/>
    <property type="match status" value="1"/>
</dbReference>
<comment type="function">
    <text>Protamines substitute for histones in the chromatin of sperm during the haploid phase of spermatogenesis. They compact sperm DNA into a highly condensed, stable and inactive complex.</text>
</comment>
<comment type="subunit">
    <text evidence="1">Cross-linked by interchain disulfide bonds around the DNA-helix.</text>
</comment>
<comment type="subcellular location">
    <subcellularLocation>
        <location>Nucleus</location>
    </subcellularLocation>
    <subcellularLocation>
        <location>Chromosome</location>
    </subcellularLocation>
</comment>
<comment type="tissue specificity">
    <text>Testis.</text>
</comment>
<comment type="PTM">
    <text evidence="3">Phosphorylated by SRPK1.</text>
</comment>
<comment type="similarity">
    <text evidence="4">Belongs to the protamine P1 family.</text>
</comment>
<protein>
    <recommendedName>
        <fullName>Sperm protamine P1</fullName>
    </recommendedName>
    <alternativeName>
        <fullName>Cysteine-rich protamine</fullName>
    </alternativeName>
</protein>
<name>HSP1_MOUSE</name>
<organism>
    <name type="scientific">Mus musculus</name>
    <name type="common">Mouse</name>
    <dbReference type="NCBI Taxonomy" id="10090"/>
    <lineage>
        <taxon>Eukaryota</taxon>
        <taxon>Metazoa</taxon>
        <taxon>Chordata</taxon>
        <taxon>Craniata</taxon>
        <taxon>Vertebrata</taxon>
        <taxon>Euteleostomi</taxon>
        <taxon>Mammalia</taxon>
        <taxon>Eutheria</taxon>
        <taxon>Euarchontoglires</taxon>
        <taxon>Glires</taxon>
        <taxon>Rodentia</taxon>
        <taxon>Myomorpha</taxon>
        <taxon>Muroidea</taxon>
        <taxon>Muridae</taxon>
        <taxon>Murinae</taxon>
        <taxon>Mus</taxon>
        <taxon>Mus</taxon>
    </lineage>
</organism>
<proteinExistence type="evidence at protein level"/>